<dbReference type="EMBL" id="AL035601">
    <property type="protein sequence ID" value="CAB38205.1"/>
    <property type="molecule type" value="Genomic_DNA"/>
</dbReference>
<dbReference type="EMBL" id="AL161591">
    <property type="protein sequence ID" value="CAB80403.1"/>
    <property type="molecule type" value="Genomic_DNA"/>
</dbReference>
<dbReference type="EMBL" id="CP002687">
    <property type="protein sequence ID" value="AEE86786.1"/>
    <property type="molecule type" value="Genomic_DNA"/>
</dbReference>
<dbReference type="PIR" id="T04732">
    <property type="entry name" value="T04732"/>
</dbReference>
<dbReference type="RefSeq" id="NP_195454.1">
    <property type="nucleotide sequence ID" value="NM_119901.2"/>
</dbReference>
<dbReference type="SMR" id="Q9SZT8"/>
<dbReference type="FunCoup" id="Q9SZT8">
    <property type="interactions" value="176"/>
</dbReference>
<dbReference type="STRING" id="3702.Q9SZT8"/>
<dbReference type="PaxDb" id="3702-AT4G37380.1"/>
<dbReference type="EnsemblPlants" id="AT4G37380.1">
    <property type="protein sequence ID" value="AT4G37380.1"/>
    <property type="gene ID" value="AT4G37380"/>
</dbReference>
<dbReference type="GeneID" id="829892"/>
<dbReference type="Gramene" id="AT4G37380.1">
    <property type="protein sequence ID" value="AT4G37380.1"/>
    <property type="gene ID" value="AT4G37380"/>
</dbReference>
<dbReference type="KEGG" id="ath:AT4G37380"/>
<dbReference type="Araport" id="AT4G37380"/>
<dbReference type="TAIR" id="AT4G37380"/>
<dbReference type="eggNOG" id="KOG4197">
    <property type="taxonomic scope" value="Eukaryota"/>
</dbReference>
<dbReference type="HOGENOM" id="CLU_002706_37_2_1"/>
<dbReference type="InParanoid" id="Q9SZT8"/>
<dbReference type="OMA" id="SKEIYMM"/>
<dbReference type="PhylomeDB" id="Q9SZT8"/>
<dbReference type="BioCyc" id="ARA:AT4G37830-MONOMER"/>
<dbReference type="BioCyc" id="MetaCyc:AT4G37830-MONOMER"/>
<dbReference type="PRO" id="PR:Q9SZT8"/>
<dbReference type="Proteomes" id="UP000006548">
    <property type="component" value="Chromosome 4"/>
</dbReference>
<dbReference type="ExpressionAtlas" id="Q9SZT8">
    <property type="expression patterns" value="baseline and differential"/>
</dbReference>
<dbReference type="GO" id="GO:0009507">
    <property type="term" value="C:chloroplast"/>
    <property type="evidence" value="ECO:0007669"/>
    <property type="project" value="UniProtKB-SubCell"/>
</dbReference>
<dbReference type="GO" id="GO:0003723">
    <property type="term" value="F:RNA binding"/>
    <property type="evidence" value="ECO:0007669"/>
    <property type="project" value="UniProtKB-KW"/>
</dbReference>
<dbReference type="GO" id="GO:0008270">
    <property type="term" value="F:zinc ion binding"/>
    <property type="evidence" value="ECO:0000314"/>
    <property type="project" value="UniProtKB"/>
</dbReference>
<dbReference type="GO" id="GO:1900865">
    <property type="term" value="P:chloroplast RNA modification"/>
    <property type="evidence" value="ECO:0000315"/>
    <property type="project" value="UniProtKB"/>
</dbReference>
<dbReference type="GO" id="GO:0006397">
    <property type="term" value="P:mRNA processing"/>
    <property type="evidence" value="ECO:0007669"/>
    <property type="project" value="UniProtKB-KW"/>
</dbReference>
<dbReference type="FunFam" id="1.25.40.10:FF:001958">
    <property type="entry name" value="Pentatricopeptide repeat-containing protein"/>
    <property type="match status" value="1"/>
</dbReference>
<dbReference type="FunFam" id="1.25.40.10:FF:001305">
    <property type="entry name" value="Pentatricopeptide repeat-containing protein At1g14470"/>
    <property type="match status" value="1"/>
</dbReference>
<dbReference type="FunFam" id="1.25.40.10:FF:000454">
    <property type="entry name" value="Pentatricopeptide repeat-containing protein At3g47530"/>
    <property type="match status" value="1"/>
</dbReference>
<dbReference type="FunFam" id="1.25.40.10:FF:001231">
    <property type="entry name" value="Pentatricopeptide repeat-containing protein ELI1, chloroplastic"/>
    <property type="match status" value="1"/>
</dbReference>
<dbReference type="Gene3D" id="1.25.40.10">
    <property type="entry name" value="Tetratricopeptide repeat domain"/>
    <property type="match status" value="4"/>
</dbReference>
<dbReference type="InterPro" id="IPR032867">
    <property type="entry name" value="DYW_dom"/>
</dbReference>
<dbReference type="InterPro" id="IPR046848">
    <property type="entry name" value="E_motif"/>
</dbReference>
<dbReference type="InterPro" id="IPR002885">
    <property type="entry name" value="Pentatricopeptide_rpt"/>
</dbReference>
<dbReference type="InterPro" id="IPR046960">
    <property type="entry name" value="PPR_At4g14850-like_plant"/>
</dbReference>
<dbReference type="InterPro" id="IPR011990">
    <property type="entry name" value="TPR-like_helical_dom_sf"/>
</dbReference>
<dbReference type="NCBIfam" id="TIGR00756">
    <property type="entry name" value="PPR"/>
    <property type="match status" value="3"/>
</dbReference>
<dbReference type="PANTHER" id="PTHR47926">
    <property type="entry name" value="PENTATRICOPEPTIDE REPEAT-CONTAINING PROTEIN"/>
    <property type="match status" value="1"/>
</dbReference>
<dbReference type="PANTHER" id="PTHR47926:SF456">
    <property type="entry name" value="PENTATRICOPEPTIDE REPEAT-CONTAINING PROTEIN ELI1, CHLOROPLASTIC"/>
    <property type="match status" value="1"/>
</dbReference>
<dbReference type="Pfam" id="PF14432">
    <property type="entry name" value="DYW_deaminase"/>
    <property type="match status" value="1"/>
</dbReference>
<dbReference type="Pfam" id="PF20431">
    <property type="entry name" value="E_motif"/>
    <property type="match status" value="1"/>
</dbReference>
<dbReference type="Pfam" id="PF01535">
    <property type="entry name" value="PPR"/>
    <property type="match status" value="4"/>
</dbReference>
<dbReference type="Pfam" id="PF13041">
    <property type="entry name" value="PPR_2"/>
    <property type="match status" value="1"/>
</dbReference>
<dbReference type="PROSITE" id="PS51375">
    <property type="entry name" value="PPR"/>
    <property type="match status" value="10"/>
</dbReference>
<comment type="function">
    <text evidence="2">Plays a major role in single RNA editing events in chloroplasts. Acts as a site-recognition transacting factor involved in the edition of the site 5 of ndhB1 and ndhB2 (ndhB1-5 and ndhB2-5 sites corresponding to cytidine-830), which are plastid-encoded subunits of the NADH-plastoquinone oxidoreductase. May provide the catalytic activity for editing site conversion.</text>
</comment>
<comment type="cofactor">
    <cofactor evidence="2">
        <name>Zn(2+)</name>
        <dbReference type="ChEBI" id="CHEBI:29105"/>
    </cofactor>
    <text evidence="2">Binds 2 zinc ions per subunit.</text>
</comment>
<comment type="subcellular location">
    <subcellularLocation>
        <location evidence="4">Plastid</location>
        <location evidence="4">Chloroplast</location>
    </subcellularLocation>
</comment>
<comment type="similarity">
    <text evidence="4">Belongs to the PPR family. PCMP-H subfamily.</text>
</comment>
<comment type="online information" name="Pentatricopeptide repeat proteins">
    <link uri="https://ppr.plantenergy.uwa.edu.au"/>
</comment>
<sequence length="632" mass="70096">MASSPLLATSLPQNQLSTTATARFRLPPPEKLAVLIDKSQSVDEVLQIHAAILRHNLLLHPRYPVLNLKLHRAYASHGKIRHSLALFHQTIDPDLFLFTAAINTASINGLKDQAFLLYVQLLSSEINPNEFTFSSLLKSCSTKSGKLIHTHVLKFGLGIDPYVATGLVDVYAKGGDVVSAQKVFDRMPERSLVSSTAMITCYAKQGNVEAARALFDSMCERDIVSWNVMIDGYAQHGFPNDALMLFQKLLAEGKPKPDEITVVAALSACSQIGALETGRWIHVFVKSSRIRLNVKVCTGLIDMYSKCGSLEEAVLVFNDTPRKDIVAWNAMIAGYAMHGYSQDALRLFNEMQGITGLQPTDITFIGTLQACAHAGLVNEGIRIFESMGQEYGIKPKIEHYGCLVSLLGRAGQLKRAYETIKNMNMDADSVLWSSVLGSCKLHGDFVLGKEIAEYLIGLNIKNSGIYVLLSNIYASVGDYEGVAKVRNLMKEKGIVKEPGISTIEIENKVHEFRAGDREHSKSKEIYTMLRKISERIKSHGYVPNTNTVLQDLEETEKEQSLQVHSERLAIAYGLISTKPGSPLKIFKNLRVCSDCHTVTKLISKITGRKIVMRDRNRFHHFTDGSCSCGDFW</sequence>
<organism>
    <name type="scientific">Arabidopsis thaliana</name>
    <name type="common">Mouse-ear cress</name>
    <dbReference type="NCBI Taxonomy" id="3702"/>
    <lineage>
        <taxon>Eukaryota</taxon>
        <taxon>Viridiplantae</taxon>
        <taxon>Streptophyta</taxon>
        <taxon>Embryophyta</taxon>
        <taxon>Tracheophyta</taxon>
        <taxon>Spermatophyta</taxon>
        <taxon>Magnoliopsida</taxon>
        <taxon>eudicotyledons</taxon>
        <taxon>Gunneridae</taxon>
        <taxon>Pentapetalae</taxon>
        <taxon>rosids</taxon>
        <taxon>malvids</taxon>
        <taxon>Brassicales</taxon>
        <taxon>Brassicaceae</taxon>
        <taxon>Camelineae</taxon>
        <taxon>Arabidopsis</taxon>
    </lineage>
</organism>
<keyword id="KW-0150">Chloroplast</keyword>
<keyword id="KW-0479">Metal-binding</keyword>
<keyword id="KW-0507">mRNA processing</keyword>
<keyword id="KW-0934">Plastid</keyword>
<keyword id="KW-1185">Reference proteome</keyword>
<keyword id="KW-0677">Repeat</keyword>
<keyword id="KW-0691">RNA editing</keyword>
<keyword id="KW-0694">RNA-binding</keyword>
<keyword id="KW-0809">Transit peptide</keyword>
<keyword id="KW-0862">Zinc</keyword>
<name>PP354_ARATH</name>
<gene>
    <name evidence="3" type="primary">ELI1</name>
    <name type="synonym">PCMP-H48</name>
    <name type="ordered locus">At4g37380</name>
    <name type="ORF">F6G17.30</name>
</gene>
<reference key="1">
    <citation type="journal article" date="1999" name="Nature">
        <title>Sequence and analysis of chromosome 4 of the plant Arabidopsis thaliana.</title>
        <authorList>
            <person name="Mayer K.F.X."/>
            <person name="Schueller C."/>
            <person name="Wambutt R."/>
            <person name="Murphy G."/>
            <person name="Volckaert G."/>
            <person name="Pohl T."/>
            <person name="Duesterhoeft A."/>
            <person name="Stiekema W."/>
            <person name="Entian K.-D."/>
            <person name="Terryn N."/>
            <person name="Harris B."/>
            <person name="Ansorge W."/>
            <person name="Brandt P."/>
            <person name="Grivell L.A."/>
            <person name="Rieger M."/>
            <person name="Weichselgartner M."/>
            <person name="de Simone V."/>
            <person name="Obermaier B."/>
            <person name="Mache R."/>
            <person name="Mueller M."/>
            <person name="Kreis M."/>
            <person name="Delseny M."/>
            <person name="Puigdomenech P."/>
            <person name="Watson M."/>
            <person name="Schmidtheini T."/>
            <person name="Reichert B."/>
            <person name="Portetelle D."/>
            <person name="Perez-Alonso M."/>
            <person name="Boutry M."/>
            <person name="Bancroft I."/>
            <person name="Vos P."/>
            <person name="Hoheisel J."/>
            <person name="Zimmermann W."/>
            <person name="Wedler H."/>
            <person name="Ridley P."/>
            <person name="Langham S.-A."/>
            <person name="McCullagh B."/>
            <person name="Bilham L."/>
            <person name="Robben J."/>
            <person name="van der Schueren J."/>
            <person name="Grymonprez B."/>
            <person name="Chuang Y.-J."/>
            <person name="Vandenbussche F."/>
            <person name="Braeken M."/>
            <person name="Weltjens I."/>
            <person name="Voet M."/>
            <person name="Bastiaens I."/>
            <person name="Aert R."/>
            <person name="Defoor E."/>
            <person name="Weitzenegger T."/>
            <person name="Bothe G."/>
            <person name="Ramsperger U."/>
            <person name="Hilbert H."/>
            <person name="Braun M."/>
            <person name="Holzer E."/>
            <person name="Brandt A."/>
            <person name="Peters S."/>
            <person name="van Staveren M."/>
            <person name="Dirkse W."/>
            <person name="Mooijman P."/>
            <person name="Klein Lankhorst R."/>
            <person name="Rose M."/>
            <person name="Hauf J."/>
            <person name="Koetter P."/>
            <person name="Berneiser S."/>
            <person name="Hempel S."/>
            <person name="Feldpausch M."/>
            <person name="Lamberth S."/>
            <person name="Van den Daele H."/>
            <person name="De Keyser A."/>
            <person name="Buysshaert C."/>
            <person name="Gielen J."/>
            <person name="Villarroel R."/>
            <person name="De Clercq R."/>
            <person name="van Montagu M."/>
            <person name="Rogers J."/>
            <person name="Cronin A."/>
            <person name="Quail M.A."/>
            <person name="Bray-Allen S."/>
            <person name="Clark L."/>
            <person name="Doggett J."/>
            <person name="Hall S."/>
            <person name="Kay M."/>
            <person name="Lennard N."/>
            <person name="McLay K."/>
            <person name="Mayes R."/>
            <person name="Pettett A."/>
            <person name="Rajandream M.A."/>
            <person name="Lyne M."/>
            <person name="Benes V."/>
            <person name="Rechmann S."/>
            <person name="Borkova D."/>
            <person name="Bloecker H."/>
            <person name="Scharfe M."/>
            <person name="Grimm M."/>
            <person name="Loehnert T.-H."/>
            <person name="Dose S."/>
            <person name="de Haan M."/>
            <person name="Maarse A.C."/>
            <person name="Schaefer M."/>
            <person name="Mueller-Auer S."/>
            <person name="Gabel C."/>
            <person name="Fuchs M."/>
            <person name="Fartmann B."/>
            <person name="Granderath K."/>
            <person name="Dauner D."/>
            <person name="Herzl A."/>
            <person name="Neumann S."/>
            <person name="Argiriou A."/>
            <person name="Vitale D."/>
            <person name="Liguori R."/>
            <person name="Piravandi E."/>
            <person name="Massenet O."/>
            <person name="Quigley F."/>
            <person name="Clabauld G."/>
            <person name="Muendlein A."/>
            <person name="Felber R."/>
            <person name="Schnabl S."/>
            <person name="Hiller R."/>
            <person name="Schmidt W."/>
            <person name="Lecharny A."/>
            <person name="Aubourg S."/>
            <person name="Chefdor F."/>
            <person name="Cooke R."/>
            <person name="Berger C."/>
            <person name="Monfort A."/>
            <person name="Casacuberta E."/>
            <person name="Gibbons T."/>
            <person name="Weber N."/>
            <person name="Vandenbol M."/>
            <person name="Bargues M."/>
            <person name="Terol J."/>
            <person name="Torres A."/>
            <person name="Perez-Perez A."/>
            <person name="Purnelle B."/>
            <person name="Bent E."/>
            <person name="Johnson S."/>
            <person name="Tacon D."/>
            <person name="Jesse T."/>
            <person name="Heijnen L."/>
            <person name="Schwarz S."/>
            <person name="Scholler P."/>
            <person name="Heber S."/>
            <person name="Francs P."/>
            <person name="Bielke C."/>
            <person name="Frishman D."/>
            <person name="Haase D."/>
            <person name="Lemcke K."/>
            <person name="Mewes H.-W."/>
            <person name="Stocker S."/>
            <person name="Zaccaria P."/>
            <person name="Bevan M."/>
            <person name="Wilson R.K."/>
            <person name="de la Bastide M."/>
            <person name="Habermann K."/>
            <person name="Parnell L."/>
            <person name="Dedhia N."/>
            <person name="Gnoj L."/>
            <person name="Schutz K."/>
            <person name="Huang E."/>
            <person name="Spiegel L."/>
            <person name="Sekhon M."/>
            <person name="Murray J."/>
            <person name="Sheet P."/>
            <person name="Cordes M."/>
            <person name="Abu-Threideh J."/>
            <person name="Stoneking T."/>
            <person name="Kalicki J."/>
            <person name="Graves T."/>
            <person name="Harmon G."/>
            <person name="Edwards J."/>
            <person name="Latreille P."/>
            <person name="Courtney L."/>
            <person name="Cloud J."/>
            <person name="Abbott A."/>
            <person name="Scott K."/>
            <person name="Johnson D."/>
            <person name="Minx P."/>
            <person name="Bentley D."/>
            <person name="Fulton B."/>
            <person name="Miller N."/>
            <person name="Greco T."/>
            <person name="Kemp K."/>
            <person name="Kramer J."/>
            <person name="Fulton L."/>
            <person name="Mardis E."/>
            <person name="Dante M."/>
            <person name="Pepin K."/>
            <person name="Hillier L.W."/>
            <person name="Nelson J."/>
            <person name="Spieth J."/>
            <person name="Ryan E."/>
            <person name="Andrews S."/>
            <person name="Geisel C."/>
            <person name="Layman D."/>
            <person name="Du H."/>
            <person name="Ali J."/>
            <person name="Berghoff A."/>
            <person name="Jones K."/>
            <person name="Drone K."/>
            <person name="Cotton M."/>
            <person name="Joshu C."/>
            <person name="Antonoiu B."/>
            <person name="Zidanic M."/>
            <person name="Strong C."/>
            <person name="Sun H."/>
            <person name="Lamar B."/>
            <person name="Yordan C."/>
            <person name="Ma P."/>
            <person name="Zhong J."/>
            <person name="Preston R."/>
            <person name="Vil D."/>
            <person name="Shekher M."/>
            <person name="Matero A."/>
            <person name="Shah R."/>
            <person name="Swaby I.K."/>
            <person name="O'Shaughnessy A."/>
            <person name="Rodriguez M."/>
            <person name="Hoffman J."/>
            <person name="Till S."/>
            <person name="Granat S."/>
            <person name="Shohdy N."/>
            <person name="Hasegawa A."/>
            <person name="Hameed A."/>
            <person name="Lodhi M."/>
            <person name="Johnson A."/>
            <person name="Chen E."/>
            <person name="Marra M.A."/>
            <person name="Martienssen R."/>
            <person name="McCombie W.R."/>
        </authorList>
    </citation>
    <scope>NUCLEOTIDE SEQUENCE [LARGE SCALE GENOMIC DNA]</scope>
    <source>
        <strain>cv. Columbia</strain>
    </source>
</reference>
<reference key="2">
    <citation type="journal article" date="2017" name="Plant J.">
        <title>Araport11: a complete reannotation of the Arabidopsis thaliana reference genome.</title>
        <authorList>
            <person name="Cheng C.Y."/>
            <person name="Krishnakumar V."/>
            <person name="Chan A.P."/>
            <person name="Thibaud-Nissen F."/>
            <person name="Schobel S."/>
            <person name="Town C.D."/>
        </authorList>
    </citation>
    <scope>GENOME REANNOTATION</scope>
    <source>
        <strain>cv. Columbia</strain>
    </source>
</reference>
<reference key="3">
    <citation type="journal article" date="2000" name="Plant Mol. Biol.">
        <title>In Arabidopsis thaliana, 1% of the genome codes for a novel protein family unique to plants.</title>
        <authorList>
            <person name="Aubourg S."/>
            <person name="Boudet N."/>
            <person name="Kreis M."/>
            <person name="Lecharny A."/>
        </authorList>
    </citation>
    <scope>GENE FAMILY</scope>
</reference>
<reference key="4">
    <citation type="journal article" date="2004" name="Plant Cell">
        <title>Genome-wide analysis of Arabidopsis pentatricopeptide repeat proteins reveals their essential role in organelle biogenesis.</title>
        <authorList>
            <person name="Lurin C."/>
            <person name="Andres C."/>
            <person name="Aubourg S."/>
            <person name="Bellaoui M."/>
            <person name="Bitton F."/>
            <person name="Bruyere C."/>
            <person name="Caboche M."/>
            <person name="Debast C."/>
            <person name="Gualberto J."/>
            <person name="Hoffmann B."/>
            <person name="Lecharny A."/>
            <person name="Le Ret M."/>
            <person name="Martin-Magniette M.-L."/>
            <person name="Mireau H."/>
            <person name="Peeters N."/>
            <person name="Renou J.-P."/>
            <person name="Szurek B."/>
            <person name="Taconnat L."/>
            <person name="Small I."/>
        </authorList>
    </citation>
    <scope>GENE FAMILY</scope>
</reference>
<reference key="5">
    <citation type="journal article" date="2013" name="J. Biol. Chem.">
        <title>Identification of two pentatricopeptide repeat genes required for RNA editing and zinc binding by C-terminal cytidine deaminase-like domains.</title>
        <authorList>
            <person name="Hayes M.L."/>
            <person name="Giang K."/>
            <person name="Berhane B."/>
            <person name="Mulligan R.M."/>
        </authorList>
    </citation>
    <scope>FUNCTION</scope>
    <scope>COFACTOR</scope>
</reference>
<protein>
    <recommendedName>
        <fullName evidence="4">Pentatricopeptide repeat-containing protein ELI1, chloroplastic</fullName>
    </recommendedName>
    <alternativeName>
        <fullName evidence="3">Protein EDITING LACKING INSERTIONAL MUTANT 1</fullName>
    </alternativeName>
</protein>
<evidence type="ECO:0000255" key="1"/>
<evidence type="ECO:0000269" key="2">
    <source>
    </source>
</evidence>
<evidence type="ECO:0000303" key="3">
    <source>
    </source>
</evidence>
<evidence type="ECO:0000305" key="4"/>
<proteinExistence type="inferred from homology"/>
<feature type="transit peptide" description="Chloroplast" evidence="1">
    <location>
        <begin position="1"/>
        <end position="19"/>
    </location>
</feature>
<feature type="chain" id="PRO_0000363471" description="Pentatricopeptide repeat-containing protein ELI1, chloroplastic">
    <location>
        <begin position="20"/>
        <end position="632"/>
    </location>
</feature>
<feature type="repeat" description="PPR 1">
    <location>
        <begin position="94"/>
        <end position="128"/>
    </location>
</feature>
<feature type="repeat" description="PPR 2">
    <location>
        <begin position="129"/>
        <end position="159"/>
    </location>
</feature>
<feature type="repeat" description="PPR 3">
    <location>
        <begin position="160"/>
        <end position="194"/>
    </location>
</feature>
<feature type="repeat" description="PPR 4">
    <location>
        <begin position="196"/>
        <end position="221"/>
    </location>
</feature>
<feature type="repeat" description="PPR 5">
    <location>
        <begin position="222"/>
        <end position="256"/>
    </location>
</feature>
<feature type="repeat" description="PPR 6">
    <location>
        <begin position="258"/>
        <end position="292"/>
    </location>
</feature>
<feature type="repeat" description="PPR 7">
    <location>
        <begin position="293"/>
        <end position="323"/>
    </location>
</feature>
<feature type="repeat" description="PPR 8">
    <location>
        <begin position="324"/>
        <end position="354"/>
    </location>
</feature>
<feature type="repeat" description="PPR 9">
    <location>
        <begin position="360"/>
        <end position="395"/>
    </location>
</feature>
<feature type="repeat" description="PPR 10">
    <location>
        <begin position="396"/>
        <end position="426"/>
    </location>
</feature>
<feature type="region of interest" description="Type E motif">
    <location>
        <begin position="431"/>
        <end position="506"/>
    </location>
</feature>
<feature type="region of interest" description="Required for function in RNA editing" evidence="2">
    <location>
        <begin position="497"/>
        <end position="512"/>
    </location>
</feature>
<feature type="region of interest" description="Type E(+) motif">
    <location>
        <begin position="507"/>
        <end position="537"/>
    </location>
</feature>
<feature type="region of interest" description="Type DYW motif">
    <location>
        <begin position="538"/>
        <end position="632"/>
    </location>
</feature>
<accession>Q9SZT8</accession>